<keyword id="KW-0963">Cytoplasm</keyword>
<keyword id="KW-0227">DNA damage</keyword>
<keyword id="KW-0233">DNA recombination</keyword>
<keyword id="KW-0234">DNA repair</keyword>
<keyword id="KW-0238">DNA-binding</keyword>
<keyword id="KW-0255">Endonuclease</keyword>
<keyword id="KW-0378">Hydrolase</keyword>
<keyword id="KW-0460">Magnesium</keyword>
<keyword id="KW-0479">Metal-binding</keyword>
<keyword id="KW-0540">Nuclease</keyword>
<keyword id="KW-1185">Reference proteome</keyword>
<proteinExistence type="inferred from homology"/>
<feature type="chain" id="PRO_0000183139" description="Crossover junction endodeoxyribonuclease RuvC">
    <location>
        <begin position="1"/>
        <end position="168"/>
    </location>
</feature>
<feature type="active site" evidence="1">
    <location>
        <position position="10"/>
    </location>
</feature>
<feature type="active site" evidence="1">
    <location>
        <position position="70"/>
    </location>
</feature>
<feature type="active site" evidence="1">
    <location>
        <position position="143"/>
    </location>
</feature>
<feature type="binding site" evidence="1">
    <location>
        <position position="10"/>
    </location>
    <ligand>
        <name>Mg(2+)</name>
        <dbReference type="ChEBI" id="CHEBI:18420"/>
        <label>1</label>
    </ligand>
</feature>
<feature type="binding site" evidence="1">
    <location>
        <position position="70"/>
    </location>
    <ligand>
        <name>Mg(2+)</name>
        <dbReference type="ChEBI" id="CHEBI:18420"/>
        <label>2</label>
    </ligand>
</feature>
<feature type="binding site" evidence="1">
    <location>
        <position position="143"/>
    </location>
    <ligand>
        <name>Mg(2+)</name>
        <dbReference type="ChEBI" id="CHEBI:18420"/>
        <label>1</label>
    </ligand>
</feature>
<protein>
    <recommendedName>
        <fullName evidence="1">Crossover junction endodeoxyribonuclease RuvC</fullName>
        <ecNumber evidence="1">3.1.21.10</ecNumber>
    </recommendedName>
    <alternativeName>
        <fullName evidence="1">Holliday junction nuclease RuvC</fullName>
    </alternativeName>
    <alternativeName>
        <fullName evidence="1">Holliday junction resolvase RuvC</fullName>
    </alternativeName>
</protein>
<comment type="function">
    <text evidence="1">The RuvA-RuvB-RuvC complex processes Holliday junction (HJ) DNA during genetic recombination and DNA repair. Endonuclease that resolves HJ intermediates. Cleaves cruciform DNA by making single-stranded nicks across the HJ at symmetrical positions within the homologous arms, yielding a 5'-phosphate and a 3'-hydroxyl group; requires a central core of homology in the junction. The consensus cleavage sequence is 5'-(A/T)TT(C/G)-3'. Cleavage occurs on the 3'-side of the TT dinucleotide at the point of strand exchange. HJ branch migration catalyzed by RuvA-RuvB allows RuvC to scan DNA until it finds its consensus sequence, where it cleaves and resolves the cruciform DNA.</text>
</comment>
<comment type="catalytic activity">
    <reaction evidence="1">
        <text>Endonucleolytic cleavage at a junction such as a reciprocal single-stranded crossover between two homologous DNA duplexes (Holliday junction).</text>
        <dbReference type="EC" id="3.1.21.10"/>
    </reaction>
</comment>
<comment type="cofactor">
    <cofactor evidence="1">
        <name>Mg(2+)</name>
        <dbReference type="ChEBI" id="CHEBI:18420"/>
    </cofactor>
    <text evidence="1">Binds 2 Mg(2+) ion per subunit.</text>
</comment>
<comment type="subunit">
    <text evidence="1">Homodimer which binds Holliday junction (HJ) DNA. The HJ becomes 2-fold symmetrical on binding to RuvC with unstacked arms; it has a different conformation from HJ DNA in complex with RuvA. In the full resolvosome a probable DNA-RuvA(4)-RuvB(12)-RuvC(2) complex forms which resolves the HJ.</text>
</comment>
<comment type="subcellular location">
    <subcellularLocation>
        <location evidence="1">Cytoplasm</location>
    </subcellularLocation>
</comment>
<comment type="similarity">
    <text evidence="1 2">Belongs to the RuvC family.</text>
</comment>
<reference key="1">
    <citation type="journal article" date="1999" name="Nature">
        <title>Evidence for lateral gene transfer between Archaea and Bacteria from genome sequence of Thermotoga maritima.</title>
        <authorList>
            <person name="Nelson K.E."/>
            <person name="Clayton R.A."/>
            <person name="Gill S.R."/>
            <person name="Gwinn M.L."/>
            <person name="Dodson R.J."/>
            <person name="Haft D.H."/>
            <person name="Hickey E.K."/>
            <person name="Peterson J.D."/>
            <person name="Nelson W.C."/>
            <person name="Ketchum K.A."/>
            <person name="McDonald L.A."/>
            <person name="Utterback T.R."/>
            <person name="Malek J.A."/>
            <person name="Linher K.D."/>
            <person name="Garrett M.M."/>
            <person name="Stewart A.M."/>
            <person name="Cotton M.D."/>
            <person name="Pratt M.S."/>
            <person name="Phillips C.A."/>
            <person name="Richardson D.L."/>
            <person name="Heidelberg J.F."/>
            <person name="Sutton G.G."/>
            <person name="Fleischmann R.D."/>
            <person name="Eisen J.A."/>
            <person name="White O."/>
            <person name="Salzberg S.L."/>
            <person name="Smith H.O."/>
            <person name="Venter J.C."/>
            <person name="Fraser C.M."/>
        </authorList>
    </citation>
    <scope>NUCLEOTIDE SEQUENCE [LARGE SCALE GENOMIC DNA]</scope>
    <source>
        <strain>ATCC 43589 / DSM 3109 / JCM 10099 / NBRC 100826 / MSB8</strain>
    </source>
</reference>
<organism>
    <name type="scientific">Thermotoga maritima (strain ATCC 43589 / DSM 3109 / JCM 10099 / NBRC 100826 / MSB8)</name>
    <dbReference type="NCBI Taxonomy" id="243274"/>
    <lineage>
        <taxon>Bacteria</taxon>
        <taxon>Thermotogati</taxon>
        <taxon>Thermotogota</taxon>
        <taxon>Thermotogae</taxon>
        <taxon>Thermotogales</taxon>
        <taxon>Thermotogaceae</taxon>
        <taxon>Thermotoga</taxon>
    </lineage>
</organism>
<evidence type="ECO:0000255" key="1">
    <source>
        <dbReference type="HAMAP-Rule" id="MF_00034"/>
    </source>
</evidence>
<evidence type="ECO:0000305" key="2"/>
<name>RUVC_THEMA</name>
<sequence length="168" mass="18705">MGSLRILGVDPGYGIVGIGIIEVSGNRISHVFHGTIETPKNLPAEKRLKRIYEEFLKVLERFSPDECAMEKLFFVKNVTTAIGVGEARGVLFLALAEKNIPVFEYAPNEVKVSLSGYGRASKKQIQENVKRFLNLSEIPRPDDAADALAIAWCHALQSRARRVTHEKD</sequence>
<dbReference type="EC" id="3.1.21.10" evidence="1"/>
<dbReference type="EMBL" id="AE000512">
    <property type="protein sequence ID" value="AAD35660.1"/>
    <property type="molecule type" value="Genomic_DNA"/>
</dbReference>
<dbReference type="PIR" id="B72360">
    <property type="entry name" value="B72360"/>
</dbReference>
<dbReference type="RefSeq" id="NP_228385.1">
    <property type="nucleotide sequence ID" value="NC_000853.1"/>
</dbReference>
<dbReference type="SMR" id="Q9WZ45"/>
<dbReference type="STRING" id="243274.TM_0575"/>
<dbReference type="PaxDb" id="243274-THEMA_01795"/>
<dbReference type="EnsemblBacteria" id="AAD35660">
    <property type="protein sequence ID" value="AAD35660"/>
    <property type="gene ID" value="TM_0575"/>
</dbReference>
<dbReference type="KEGG" id="tma:TM0575"/>
<dbReference type="PATRIC" id="fig|243274.5.peg.584"/>
<dbReference type="eggNOG" id="COG0817">
    <property type="taxonomic scope" value="Bacteria"/>
</dbReference>
<dbReference type="InParanoid" id="Q9WZ45"/>
<dbReference type="OrthoDB" id="9805499at2"/>
<dbReference type="Proteomes" id="UP000008183">
    <property type="component" value="Chromosome"/>
</dbReference>
<dbReference type="GO" id="GO:0005737">
    <property type="term" value="C:cytoplasm"/>
    <property type="evidence" value="ECO:0007669"/>
    <property type="project" value="UniProtKB-SubCell"/>
</dbReference>
<dbReference type="GO" id="GO:0048476">
    <property type="term" value="C:Holliday junction resolvase complex"/>
    <property type="evidence" value="ECO:0007669"/>
    <property type="project" value="UniProtKB-UniRule"/>
</dbReference>
<dbReference type="GO" id="GO:0008821">
    <property type="term" value="F:crossover junction DNA endonuclease activity"/>
    <property type="evidence" value="ECO:0007669"/>
    <property type="project" value="UniProtKB-UniRule"/>
</dbReference>
<dbReference type="GO" id="GO:0003677">
    <property type="term" value="F:DNA binding"/>
    <property type="evidence" value="ECO:0007669"/>
    <property type="project" value="UniProtKB-KW"/>
</dbReference>
<dbReference type="GO" id="GO:0000287">
    <property type="term" value="F:magnesium ion binding"/>
    <property type="evidence" value="ECO:0007669"/>
    <property type="project" value="UniProtKB-UniRule"/>
</dbReference>
<dbReference type="GO" id="GO:0006310">
    <property type="term" value="P:DNA recombination"/>
    <property type="evidence" value="ECO:0007669"/>
    <property type="project" value="UniProtKB-UniRule"/>
</dbReference>
<dbReference type="GO" id="GO:0006281">
    <property type="term" value="P:DNA repair"/>
    <property type="evidence" value="ECO:0007669"/>
    <property type="project" value="UniProtKB-UniRule"/>
</dbReference>
<dbReference type="CDD" id="cd16962">
    <property type="entry name" value="RuvC"/>
    <property type="match status" value="1"/>
</dbReference>
<dbReference type="FunFam" id="3.30.420.10:FF:000002">
    <property type="entry name" value="Crossover junction endodeoxyribonuclease RuvC"/>
    <property type="match status" value="1"/>
</dbReference>
<dbReference type="Gene3D" id="3.30.420.10">
    <property type="entry name" value="Ribonuclease H-like superfamily/Ribonuclease H"/>
    <property type="match status" value="1"/>
</dbReference>
<dbReference type="HAMAP" id="MF_00034">
    <property type="entry name" value="RuvC"/>
    <property type="match status" value="1"/>
</dbReference>
<dbReference type="InterPro" id="IPR012337">
    <property type="entry name" value="RNaseH-like_sf"/>
</dbReference>
<dbReference type="InterPro" id="IPR036397">
    <property type="entry name" value="RNaseH_sf"/>
</dbReference>
<dbReference type="InterPro" id="IPR020563">
    <property type="entry name" value="X-over_junc_endoDNase_Mg_BS"/>
</dbReference>
<dbReference type="InterPro" id="IPR002176">
    <property type="entry name" value="X-over_junc_endoDNase_RuvC"/>
</dbReference>
<dbReference type="NCBIfam" id="NF000711">
    <property type="entry name" value="PRK00039.2-1"/>
    <property type="match status" value="1"/>
</dbReference>
<dbReference type="NCBIfam" id="TIGR00228">
    <property type="entry name" value="ruvC"/>
    <property type="match status" value="1"/>
</dbReference>
<dbReference type="PANTHER" id="PTHR30194">
    <property type="entry name" value="CROSSOVER JUNCTION ENDODEOXYRIBONUCLEASE RUVC"/>
    <property type="match status" value="1"/>
</dbReference>
<dbReference type="PANTHER" id="PTHR30194:SF3">
    <property type="entry name" value="CROSSOVER JUNCTION ENDODEOXYRIBONUCLEASE RUVC"/>
    <property type="match status" value="1"/>
</dbReference>
<dbReference type="Pfam" id="PF02075">
    <property type="entry name" value="RuvC"/>
    <property type="match status" value="1"/>
</dbReference>
<dbReference type="PRINTS" id="PR00696">
    <property type="entry name" value="RSOLVASERUVC"/>
</dbReference>
<dbReference type="SUPFAM" id="SSF53098">
    <property type="entry name" value="Ribonuclease H-like"/>
    <property type="match status" value="1"/>
</dbReference>
<dbReference type="PROSITE" id="PS01321">
    <property type="entry name" value="RUVC"/>
    <property type="match status" value="1"/>
</dbReference>
<accession>Q9WZ45</accession>
<gene>
    <name evidence="1" type="primary">ruvC</name>
    <name type="ordered locus">TM_0575</name>
</gene>